<dbReference type="EMBL" id="DQ383815">
    <property type="protein sequence ID" value="ABD47136.1"/>
    <property type="molecule type" value="Genomic_DNA"/>
</dbReference>
<dbReference type="RefSeq" id="YP_588107.1">
    <property type="nucleotide sequence ID" value="NC_007977.1"/>
</dbReference>
<dbReference type="SMR" id="Q1KXW9"/>
<dbReference type="GeneID" id="4055575"/>
<dbReference type="KEGG" id="han:4055575"/>
<dbReference type="OrthoDB" id="565471at2759"/>
<dbReference type="PhylomeDB" id="Q1KXW9"/>
<dbReference type="GO" id="GO:0009507">
    <property type="term" value="C:chloroplast"/>
    <property type="evidence" value="ECO:0007669"/>
    <property type="project" value="UniProtKB-SubCell"/>
</dbReference>
<dbReference type="GO" id="GO:0015935">
    <property type="term" value="C:small ribosomal subunit"/>
    <property type="evidence" value="ECO:0007669"/>
    <property type="project" value="InterPro"/>
</dbReference>
<dbReference type="GO" id="GO:0003735">
    <property type="term" value="F:structural constituent of ribosome"/>
    <property type="evidence" value="ECO:0007669"/>
    <property type="project" value="InterPro"/>
</dbReference>
<dbReference type="GO" id="GO:0006412">
    <property type="term" value="P:translation"/>
    <property type="evidence" value="ECO:0007669"/>
    <property type="project" value="UniProtKB-UniRule"/>
</dbReference>
<dbReference type="CDD" id="cd01425">
    <property type="entry name" value="RPS2"/>
    <property type="match status" value="1"/>
</dbReference>
<dbReference type="FunFam" id="3.40.50.10490:FF:000101">
    <property type="match status" value="1"/>
</dbReference>
<dbReference type="FunFam" id="1.10.287.610:FF:000001">
    <property type="entry name" value="30S ribosomal protein S2"/>
    <property type="match status" value="1"/>
</dbReference>
<dbReference type="Gene3D" id="3.40.50.10490">
    <property type="entry name" value="Glucose-6-phosphate isomerase like protein, domain 1"/>
    <property type="match status" value="1"/>
</dbReference>
<dbReference type="Gene3D" id="1.10.287.610">
    <property type="entry name" value="Helix hairpin bin"/>
    <property type="match status" value="1"/>
</dbReference>
<dbReference type="HAMAP" id="MF_00291_B">
    <property type="entry name" value="Ribosomal_uS2_B"/>
    <property type="match status" value="1"/>
</dbReference>
<dbReference type="InterPro" id="IPR001865">
    <property type="entry name" value="Ribosomal_uS2"/>
</dbReference>
<dbReference type="InterPro" id="IPR005706">
    <property type="entry name" value="Ribosomal_uS2_bac/mit/plastid"/>
</dbReference>
<dbReference type="InterPro" id="IPR018130">
    <property type="entry name" value="Ribosomal_uS2_CS"/>
</dbReference>
<dbReference type="InterPro" id="IPR023591">
    <property type="entry name" value="Ribosomal_uS2_flav_dom_sf"/>
</dbReference>
<dbReference type="NCBIfam" id="TIGR01011">
    <property type="entry name" value="rpsB_bact"/>
    <property type="match status" value="1"/>
</dbReference>
<dbReference type="PANTHER" id="PTHR12534">
    <property type="entry name" value="30S RIBOSOMAL PROTEIN S2 PROKARYOTIC AND ORGANELLAR"/>
    <property type="match status" value="1"/>
</dbReference>
<dbReference type="PANTHER" id="PTHR12534:SF0">
    <property type="entry name" value="SMALL RIBOSOMAL SUBUNIT PROTEIN US2M"/>
    <property type="match status" value="1"/>
</dbReference>
<dbReference type="Pfam" id="PF00318">
    <property type="entry name" value="Ribosomal_S2"/>
    <property type="match status" value="1"/>
</dbReference>
<dbReference type="PRINTS" id="PR00395">
    <property type="entry name" value="RIBOSOMALS2"/>
</dbReference>
<dbReference type="SUPFAM" id="SSF52313">
    <property type="entry name" value="Ribosomal protein S2"/>
    <property type="match status" value="1"/>
</dbReference>
<dbReference type="PROSITE" id="PS00962">
    <property type="entry name" value="RIBOSOMAL_S2_1"/>
    <property type="match status" value="1"/>
</dbReference>
<dbReference type="PROSITE" id="PS00963">
    <property type="entry name" value="RIBOSOMAL_S2_2"/>
    <property type="match status" value="1"/>
</dbReference>
<reference key="1">
    <citation type="submission" date="2006-01" db="EMBL/GenBank/DDBJ databases">
        <title>A comparison of the first two published chloroplast genomes in Asteraceae: Lactuca and Helianthus.</title>
        <authorList>
            <person name="Timme R.E."/>
            <person name="Kuehl J.V."/>
            <person name="Boore J.L."/>
            <person name="Jansen R.K."/>
        </authorList>
    </citation>
    <scope>NUCLEOTIDE SEQUENCE [LARGE SCALE GENOMIC DNA]</scope>
    <source>
        <strain>cv. HA383</strain>
    </source>
</reference>
<organism>
    <name type="scientific">Helianthus annuus</name>
    <name type="common">Common sunflower</name>
    <dbReference type="NCBI Taxonomy" id="4232"/>
    <lineage>
        <taxon>Eukaryota</taxon>
        <taxon>Viridiplantae</taxon>
        <taxon>Streptophyta</taxon>
        <taxon>Embryophyta</taxon>
        <taxon>Tracheophyta</taxon>
        <taxon>Spermatophyta</taxon>
        <taxon>Magnoliopsida</taxon>
        <taxon>eudicotyledons</taxon>
        <taxon>Gunneridae</taxon>
        <taxon>Pentapetalae</taxon>
        <taxon>asterids</taxon>
        <taxon>campanulids</taxon>
        <taxon>Asterales</taxon>
        <taxon>Asteraceae</taxon>
        <taxon>Asteroideae</taxon>
        <taxon>Heliantheae alliance</taxon>
        <taxon>Heliantheae</taxon>
        <taxon>Helianthus</taxon>
    </lineage>
</organism>
<comment type="subcellular location">
    <subcellularLocation>
        <location>Plastid</location>
        <location>Chloroplast</location>
    </subcellularLocation>
</comment>
<comment type="similarity">
    <text evidence="1">Belongs to the universal ribosomal protein uS2 family.</text>
</comment>
<keyword id="KW-0150">Chloroplast</keyword>
<keyword id="KW-0934">Plastid</keyword>
<keyword id="KW-0687">Ribonucleoprotein</keyword>
<keyword id="KW-0689">Ribosomal protein</keyword>
<proteinExistence type="inferred from homology"/>
<geneLocation type="chloroplast"/>
<name>RR2_HELAN</name>
<accession>Q1KXW9</accession>
<sequence length="236" mass="26736">MTRRYWNINLEEMMEAGVHFGHGTRKWNPKMAPYISAKRKGIHITNLTRTARFLSEACDLVFDAASRGKQFLIVGTKNKEADSVAWAAIRARCHYVNKKWLGGMLTNWSTTETRLHKFRDLRTEQKTGGLSRLPKRDAAMLKRQLSHLQTYLGGIKYMTGLPDIVIIVDQHEEYTALQECITLGIPTICLIDTNCDPDLADISIPANDDAISSIRLILNKLVFAICEGRSGYIRNP</sequence>
<feature type="chain" id="PRO_0000352118" description="Small ribosomal subunit protein uS2c">
    <location>
        <begin position="1"/>
        <end position="236"/>
    </location>
</feature>
<gene>
    <name type="primary">rps2</name>
</gene>
<evidence type="ECO:0000305" key="1"/>
<protein>
    <recommendedName>
        <fullName evidence="1">Small ribosomal subunit protein uS2c</fullName>
    </recommendedName>
    <alternativeName>
        <fullName>30S ribosomal protein S2, chloroplastic</fullName>
    </alternativeName>
</protein>